<proteinExistence type="inferred from homology"/>
<evidence type="ECO:0000255" key="1">
    <source>
        <dbReference type="HAMAP-Rule" id="MF_00632"/>
    </source>
</evidence>
<feature type="chain" id="PRO_1000051755" description="Nucleotide-binding protein Sama_2557">
    <location>
        <begin position="1"/>
        <end position="161"/>
    </location>
</feature>
<gene>
    <name type="ordered locus">Sama_2557</name>
</gene>
<keyword id="KW-0547">Nucleotide-binding</keyword>
<keyword id="KW-1185">Reference proteome</keyword>
<name>Y2557_SHEAM</name>
<organism>
    <name type="scientific">Shewanella amazonensis (strain ATCC BAA-1098 / SB2B)</name>
    <dbReference type="NCBI Taxonomy" id="326297"/>
    <lineage>
        <taxon>Bacteria</taxon>
        <taxon>Pseudomonadati</taxon>
        <taxon>Pseudomonadota</taxon>
        <taxon>Gammaproteobacteria</taxon>
        <taxon>Alteromonadales</taxon>
        <taxon>Shewanellaceae</taxon>
        <taxon>Shewanella</taxon>
    </lineage>
</organism>
<sequence length="161" mass="18473">MPSFDIVSEVDAVELKNAVENTRREMDGRFDFRGVEYSVDFKDMVVILRSESDFQCRQMVDILRGQLAKRNVDAKAMEVDDKIVHTGKTFAQNVKFKQGIEQDVAKKLIKLIKDSKVKVQAQIQGDSIRVTGKKRDDLQAIMQLARTSELGQPFQFNNFRD</sequence>
<protein>
    <recommendedName>
        <fullName evidence="1">Nucleotide-binding protein Sama_2557</fullName>
    </recommendedName>
</protein>
<accession>A1S8Q3</accession>
<dbReference type="EMBL" id="CP000507">
    <property type="protein sequence ID" value="ABM00760.1"/>
    <property type="molecule type" value="Genomic_DNA"/>
</dbReference>
<dbReference type="RefSeq" id="WP_011760666.1">
    <property type="nucleotide sequence ID" value="NC_008700.1"/>
</dbReference>
<dbReference type="SMR" id="A1S8Q3"/>
<dbReference type="STRING" id="326297.Sama_2557"/>
<dbReference type="KEGG" id="saz:Sama_2557"/>
<dbReference type="eggNOG" id="COG1666">
    <property type="taxonomic scope" value="Bacteria"/>
</dbReference>
<dbReference type="HOGENOM" id="CLU_099839_1_0_6"/>
<dbReference type="OrthoDB" id="9801447at2"/>
<dbReference type="Proteomes" id="UP000009175">
    <property type="component" value="Chromosome"/>
</dbReference>
<dbReference type="GO" id="GO:0005829">
    <property type="term" value="C:cytosol"/>
    <property type="evidence" value="ECO:0007669"/>
    <property type="project" value="TreeGrafter"/>
</dbReference>
<dbReference type="GO" id="GO:0000166">
    <property type="term" value="F:nucleotide binding"/>
    <property type="evidence" value="ECO:0007669"/>
    <property type="project" value="TreeGrafter"/>
</dbReference>
<dbReference type="CDD" id="cd11740">
    <property type="entry name" value="YajQ_like"/>
    <property type="match status" value="1"/>
</dbReference>
<dbReference type="FunFam" id="3.30.70.860:FF:000001">
    <property type="entry name" value="UPF0234 protein YajQ"/>
    <property type="match status" value="1"/>
</dbReference>
<dbReference type="Gene3D" id="3.30.70.860">
    <property type="match status" value="1"/>
</dbReference>
<dbReference type="Gene3D" id="3.30.70.990">
    <property type="entry name" value="YajQ-like, domain 2"/>
    <property type="match status" value="1"/>
</dbReference>
<dbReference type="HAMAP" id="MF_00632">
    <property type="entry name" value="YajQ"/>
    <property type="match status" value="1"/>
</dbReference>
<dbReference type="InterPro" id="IPR007551">
    <property type="entry name" value="DUF520"/>
</dbReference>
<dbReference type="InterPro" id="IPR035571">
    <property type="entry name" value="UPF0234-like_C"/>
</dbReference>
<dbReference type="InterPro" id="IPR035570">
    <property type="entry name" value="UPF0234_N"/>
</dbReference>
<dbReference type="InterPro" id="IPR036183">
    <property type="entry name" value="YajQ-like_sf"/>
</dbReference>
<dbReference type="NCBIfam" id="NF003819">
    <property type="entry name" value="PRK05412.1"/>
    <property type="match status" value="1"/>
</dbReference>
<dbReference type="PANTHER" id="PTHR30476">
    <property type="entry name" value="UPF0234 PROTEIN YAJQ"/>
    <property type="match status" value="1"/>
</dbReference>
<dbReference type="PANTHER" id="PTHR30476:SF0">
    <property type="entry name" value="UPF0234 PROTEIN YAJQ"/>
    <property type="match status" value="1"/>
</dbReference>
<dbReference type="Pfam" id="PF04461">
    <property type="entry name" value="DUF520"/>
    <property type="match status" value="1"/>
</dbReference>
<dbReference type="SUPFAM" id="SSF89963">
    <property type="entry name" value="YajQ-like"/>
    <property type="match status" value="2"/>
</dbReference>
<reference key="1">
    <citation type="submission" date="2006-12" db="EMBL/GenBank/DDBJ databases">
        <title>Complete sequence of Shewanella amazonensis SB2B.</title>
        <authorList>
            <consortium name="US DOE Joint Genome Institute"/>
            <person name="Copeland A."/>
            <person name="Lucas S."/>
            <person name="Lapidus A."/>
            <person name="Barry K."/>
            <person name="Detter J.C."/>
            <person name="Glavina del Rio T."/>
            <person name="Hammon N."/>
            <person name="Israni S."/>
            <person name="Dalin E."/>
            <person name="Tice H."/>
            <person name="Pitluck S."/>
            <person name="Munk A.C."/>
            <person name="Brettin T."/>
            <person name="Bruce D."/>
            <person name="Han C."/>
            <person name="Tapia R."/>
            <person name="Gilna P."/>
            <person name="Schmutz J."/>
            <person name="Larimer F."/>
            <person name="Land M."/>
            <person name="Hauser L."/>
            <person name="Kyrpides N."/>
            <person name="Mikhailova N."/>
            <person name="Fredrickson J."/>
            <person name="Richardson P."/>
        </authorList>
    </citation>
    <scope>NUCLEOTIDE SEQUENCE [LARGE SCALE GENOMIC DNA]</scope>
    <source>
        <strain>ATCC BAA-1098 / SB2B</strain>
    </source>
</reference>
<comment type="function">
    <text evidence="1">Nucleotide-binding protein.</text>
</comment>
<comment type="similarity">
    <text evidence="1">Belongs to the YajQ family.</text>
</comment>